<protein>
    <recommendedName>
        <fullName>Hemoglobin subunit alpha-D</fullName>
    </recommendedName>
    <alternativeName>
        <fullName>Alpha-D-globin</fullName>
    </alternativeName>
    <alternativeName>
        <fullName>Hemoglobin alpha-D chain</fullName>
    </alternativeName>
</protein>
<reference key="1">
    <citation type="journal article" date="1983" name="EMBO J.">
        <title>The primary structure of the duck alpha(D)-globin gene: an unusual 5' splice junction sequence.</title>
        <authorList>
            <person name="Erbil C."/>
            <person name="Niessing J."/>
        </authorList>
    </citation>
    <scope>NUCLEOTIDE SEQUENCE [GENOMIC DNA]</scope>
</reference>
<reference key="2">
    <citation type="journal article" date="1982" name="Gene">
        <title>The isolation and partial characterization of linked alpha A- and alpha D-globin genes from a duck DNA recombinant library.</title>
        <authorList>
            <person name="Niessing J."/>
            <person name="Erbil C."/>
            <person name="Neubauer V."/>
        </authorList>
    </citation>
    <scope>NUCLEOTIDE SEQUENCE [GENOMIC DNA] OF 1-30</scope>
</reference>
<gene>
    <name type="primary">HBAD</name>
</gene>
<comment type="function">
    <text>Involved in oxygen transport from the lung to the various peripheral tissues.</text>
</comment>
<comment type="subunit">
    <text>Heterotetramer of two alpha-D chains and two beta chains.</text>
</comment>
<comment type="tissue specificity">
    <text>Red blood cells.</text>
</comment>
<comment type="developmental stage">
    <text>In birds, the alpha-D chain occurs in a minor hemoglobin component, called hemoglobin d, which is expressed in late embryonic and adult life.</text>
</comment>
<comment type="similarity">
    <text evidence="1">Belongs to the globin family.</text>
</comment>
<comment type="caution">
    <text evidence="2">The authors believe the gene from which the sequence was translated to be functional although the second intron begins with 'GC' rather than the usual 'GT'.</text>
</comment>
<evidence type="ECO:0000255" key="1">
    <source>
        <dbReference type="PROSITE-ProRule" id="PRU00238"/>
    </source>
</evidence>
<evidence type="ECO:0000305" key="2"/>
<keyword id="KW-0349">Heme</keyword>
<keyword id="KW-0408">Iron</keyword>
<keyword id="KW-0479">Metal-binding</keyword>
<keyword id="KW-0561">Oxygen transport</keyword>
<keyword id="KW-1185">Reference proteome</keyword>
<keyword id="KW-0813">Transport</keyword>
<proteinExistence type="evidence at transcript level"/>
<feature type="chain" id="PRO_0000052821" description="Hemoglobin subunit alpha-D">
    <location>
        <begin position="1"/>
        <end position="141"/>
    </location>
</feature>
<feature type="domain" description="Globin" evidence="1">
    <location>
        <begin position="1"/>
        <end position="141"/>
    </location>
</feature>
<feature type="binding site" description="distal binding residue">
    <location>
        <position position="58"/>
    </location>
    <ligand>
        <name>heme b</name>
        <dbReference type="ChEBI" id="CHEBI:60344"/>
    </ligand>
    <ligandPart>
        <name>Fe</name>
        <dbReference type="ChEBI" id="CHEBI:18248"/>
    </ligandPart>
</feature>
<feature type="binding site" description="proximal binding residue">
    <location>
        <position position="87"/>
    </location>
    <ligand>
        <name>heme b</name>
        <dbReference type="ChEBI" id="CHEBI:60344"/>
    </ligand>
    <ligandPart>
        <name>Fe</name>
        <dbReference type="ChEBI" id="CHEBI:18248"/>
    </ligandPart>
</feature>
<organism>
    <name type="scientific">Cairina moschata</name>
    <name type="common">Muscovy duck</name>
    <dbReference type="NCBI Taxonomy" id="8855"/>
    <lineage>
        <taxon>Eukaryota</taxon>
        <taxon>Metazoa</taxon>
        <taxon>Chordata</taxon>
        <taxon>Craniata</taxon>
        <taxon>Vertebrata</taxon>
        <taxon>Euteleostomi</taxon>
        <taxon>Archelosauria</taxon>
        <taxon>Archosauria</taxon>
        <taxon>Dinosauria</taxon>
        <taxon>Saurischia</taxon>
        <taxon>Theropoda</taxon>
        <taxon>Coelurosauria</taxon>
        <taxon>Aves</taxon>
        <taxon>Neognathae</taxon>
        <taxon>Galloanserae</taxon>
        <taxon>Anseriformes</taxon>
        <taxon>Anatidae</taxon>
        <taxon>Anatinae</taxon>
        <taxon>Cairina</taxon>
    </lineage>
</organism>
<accession>P02003</accession>
<name>HBAD_CAIMO</name>
<dbReference type="EMBL" id="X01831">
    <property type="protein sequence ID" value="CAA25966.2"/>
    <property type="molecule type" value="Genomic_DNA"/>
</dbReference>
<dbReference type="EMBL" id="J00925">
    <property type="protein sequence ID" value="AAA49147.1"/>
    <property type="molecule type" value="Genomic_DNA"/>
</dbReference>
<dbReference type="PIR" id="A02325">
    <property type="entry name" value="HADKMD"/>
</dbReference>
<dbReference type="SMR" id="P02003"/>
<dbReference type="Proteomes" id="UP000694556">
    <property type="component" value="Unplaced"/>
</dbReference>
<dbReference type="GO" id="GO:0072562">
    <property type="term" value="C:blood microparticle"/>
    <property type="evidence" value="ECO:0007669"/>
    <property type="project" value="TreeGrafter"/>
</dbReference>
<dbReference type="GO" id="GO:0031838">
    <property type="term" value="C:haptoglobin-hemoglobin complex"/>
    <property type="evidence" value="ECO:0007669"/>
    <property type="project" value="TreeGrafter"/>
</dbReference>
<dbReference type="GO" id="GO:0005833">
    <property type="term" value="C:hemoglobin complex"/>
    <property type="evidence" value="ECO:0007669"/>
    <property type="project" value="InterPro"/>
</dbReference>
<dbReference type="GO" id="GO:0031720">
    <property type="term" value="F:haptoglobin binding"/>
    <property type="evidence" value="ECO:0007669"/>
    <property type="project" value="TreeGrafter"/>
</dbReference>
<dbReference type="GO" id="GO:0020037">
    <property type="term" value="F:heme binding"/>
    <property type="evidence" value="ECO:0007669"/>
    <property type="project" value="InterPro"/>
</dbReference>
<dbReference type="GO" id="GO:0005506">
    <property type="term" value="F:iron ion binding"/>
    <property type="evidence" value="ECO:0007669"/>
    <property type="project" value="InterPro"/>
</dbReference>
<dbReference type="GO" id="GO:0043177">
    <property type="term" value="F:organic acid binding"/>
    <property type="evidence" value="ECO:0007669"/>
    <property type="project" value="TreeGrafter"/>
</dbReference>
<dbReference type="GO" id="GO:0019825">
    <property type="term" value="F:oxygen binding"/>
    <property type="evidence" value="ECO:0007669"/>
    <property type="project" value="InterPro"/>
</dbReference>
<dbReference type="GO" id="GO:0005344">
    <property type="term" value="F:oxygen carrier activity"/>
    <property type="evidence" value="ECO:0007669"/>
    <property type="project" value="UniProtKB-KW"/>
</dbReference>
<dbReference type="GO" id="GO:0004601">
    <property type="term" value="F:peroxidase activity"/>
    <property type="evidence" value="ECO:0007669"/>
    <property type="project" value="TreeGrafter"/>
</dbReference>
<dbReference type="GO" id="GO:0042744">
    <property type="term" value="P:hydrogen peroxide catabolic process"/>
    <property type="evidence" value="ECO:0007669"/>
    <property type="project" value="TreeGrafter"/>
</dbReference>
<dbReference type="CDD" id="cd08927">
    <property type="entry name" value="Hb-alpha-like"/>
    <property type="match status" value="1"/>
</dbReference>
<dbReference type="FunFam" id="1.10.490.10:FF:000002">
    <property type="entry name" value="Hemoglobin subunit alpha"/>
    <property type="match status" value="1"/>
</dbReference>
<dbReference type="Gene3D" id="1.10.490.10">
    <property type="entry name" value="Globins"/>
    <property type="match status" value="1"/>
</dbReference>
<dbReference type="InterPro" id="IPR000971">
    <property type="entry name" value="Globin"/>
</dbReference>
<dbReference type="InterPro" id="IPR009050">
    <property type="entry name" value="Globin-like_sf"/>
</dbReference>
<dbReference type="InterPro" id="IPR012292">
    <property type="entry name" value="Globin/Proto"/>
</dbReference>
<dbReference type="InterPro" id="IPR002338">
    <property type="entry name" value="Hemoglobin_a-typ"/>
</dbReference>
<dbReference type="InterPro" id="IPR050056">
    <property type="entry name" value="Hemoglobin_oxygen_transport"/>
</dbReference>
<dbReference type="InterPro" id="IPR002340">
    <property type="entry name" value="Hemoglobin_zeta"/>
</dbReference>
<dbReference type="PANTHER" id="PTHR11442">
    <property type="entry name" value="HEMOGLOBIN FAMILY MEMBER"/>
    <property type="match status" value="1"/>
</dbReference>
<dbReference type="PANTHER" id="PTHR11442:SF41">
    <property type="entry name" value="HEMOGLOBIN SUBUNIT ZETA"/>
    <property type="match status" value="1"/>
</dbReference>
<dbReference type="Pfam" id="PF00042">
    <property type="entry name" value="Globin"/>
    <property type="match status" value="1"/>
</dbReference>
<dbReference type="PRINTS" id="PR00612">
    <property type="entry name" value="ALPHAHAEM"/>
</dbReference>
<dbReference type="PRINTS" id="PR00816">
    <property type="entry name" value="ZETAHAEM"/>
</dbReference>
<dbReference type="SUPFAM" id="SSF46458">
    <property type="entry name" value="Globin-like"/>
    <property type="match status" value="1"/>
</dbReference>
<dbReference type="PROSITE" id="PS01033">
    <property type="entry name" value="GLOBIN"/>
    <property type="match status" value="1"/>
</dbReference>
<sequence length="141" mass="15712">MLTAEDKKLIVQVWEKVAGHQEEFGSEALQRMFLAYPQTKTYFPHFDLHPGSEQVRGHGKKVAAALGNAVKSLDNLSQALSELSNLHAYNLRVDPVNFKLLAQCFQVVLAAHLGKDYSPEMHAAFDKFLSAVAAVLAEKYR</sequence>